<protein>
    <recommendedName>
        <fullName evidence="1">2-isopropylmalate synthase 2</fullName>
        <ecNumber evidence="4">2.3.3.13</ecNumber>
    </recommendedName>
    <alternativeName>
        <fullName evidence="6">Alpha-IPM synthase 2</fullName>
    </alternativeName>
    <alternativeName>
        <fullName evidence="5">Alpha-isopropylmalate synthase 2</fullName>
    </alternativeName>
</protein>
<comment type="function">
    <text evidence="4">Catalyzes the condensation of the acetyl group of acetyl-CoA with 3-methyl-2-oxobutanoate (2-ketoisovalerate) to form 3-carboxy-3-hydroxy-4-methylpentanoate (2-isopropylmalate). Has high alpha-isopropylmalate synthase activity and low citramalate synthase activity (PubMed:15292141).</text>
</comment>
<comment type="catalytic activity">
    <reaction evidence="4">
        <text>3-methyl-2-oxobutanoate + acetyl-CoA + H2O = (2S)-2-isopropylmalate + CoA + H(+)</text>
        <dbReference type="Rhea" id="RHEA:21524"/>
        <dbReference type="ChEBI" id="CHEBI:1178"/>
        <dbReference type="ChEBI" id="CHEBI:11851"/>
        <dbReference type="ChEBI" id="CHEBI:15377"/>
        <dbReference type="ChEBI" id="CHEBI:15378"/>
        <dbReference type="ChEBI" id="CHEBI:57287"/>
        <dbReference type="ChEBI" id="CHEBI:57288"/>
        <dbReference type="EC" id="2.3.3.13"/>
    </reaction>
    <physiologicalReaction direction="left-to-right" evidence="4">
        <dbReference type="Rhea" id="RHEA:21525"/>
    </physiologicalReaction>
</comment>
<comment type="cofactor">
    <cofactor>
        <name>Mn(2+)</name>
        <dbReference type="ChEBI" id="CHEBI:29035"/>
    </cofactor>
</comment>
<comment type="biophysicochemical properties">
    <kinetics>
        <KM evidence="4">0.108 mM for 3-methyl-2-oxobutanoate</KM>
        <KM evidence="4">0.709 mM for pyruvate</KM>
    </kinetics>
</comment>
<comment type="pathway">
    <text evidence="4">Amino-acid biosynthesis; L-leucine biosynthesis; L-leucine from 3-methyl-2-oxobutanoate: step 1/4.</text>
</comment>
<comment type="subunit">
    <text evidence="1">Homodimer.</text>
</comment>
<comment type="subcellular location">
    <subcellularLocation>
        <location evidence="1">Cytoplasm</location>
    </subcellularLocation>
</comment>
<comment type="induction">
    <text evidence="4">Expression is significantly repressed by leucine and moderately repressed by isoleucine.</text>
</comment>
<comment type="miscellaneous">
    <text evidence="3">Is missing the C-terminal regulatory domain compared to orthologs.</text>
</comment>
<comment type="similarity">
    <text evidence="6">Belongs to the alpha-IPM synthase/homocitrate synthase family. LeuA type 1 subfamily.</text>
</comment>
<reference key="1">
    <citation type="journal article" date="2003" name="Nature">
        <title>Unique physiological and pathogenic features of Leptospira interrogans revealed by whole-genome sequencing.</title>
        <authorList>
            <person name="Ren S.-X."/>
            <person name="Fu G."/>
            <person name="Jiang X.-G."/>
            <person name="Zeng R."/>
            <person name="Miao Y.-G."/>
            <person name="Xu H."/>
            <person name="Zhang Y.-X."/>
            <person name="Xiong H."/>
            <person name="Lu G."/>
            <person name="Lu L.-F."/>
            <person name="Jiang H.-Q."/>
            <person name="Jia J."/>
            <person name="Tu Y.-F."/>
            <person name="Jiang J.-X."/>
            <person name="Gu W.-Y."/>
            <person name="Zhang Y.-Q."/>
            <person name="Cai Z."/>
            <person name="Sheng H.-H."/>
            <person name="Yin H.-F."/>
            <person name="Zhang Y."/>
            <person name="Zhu G.-F."/>
            <person name="Wan M."/>
            <person name="Huang H.-L."/>
            <person name="Qian Z."/>
            <person name="Wang S.-Y."/>
            <person name="Ma W."/>
            <person name="Yao Z.-J."/>
            <person name="Shen Y."/>
            <person name="Qiang B.-Q."/>
            <person name="Xia Q.-C."/>
            <person name="Guo X.-K."/>
            <person name="Danchin A."/>
            <person name="Saint Girons I."/>
            <person name="Somerville R.L."/>
            <person name="Wen Y.-M."/>
            <person name="Shi M.-H."/>
            <person name="Chen Z."/>
            <person name="Xu J.-G."/>
            <person name="Zhao G.-P."/>
        </authorList>
    </citation>
    <scope>NUCLEOTIDE SEQUENCE [LARGE SCALE GENOMIC DNA]</scope>
    <source>
        <strain>56601</strain>
    </source>
</reference>
<reference key="2">
    <citation type="journal article" date="2004" name="J. Bacteriol.">
        <title>Isoleucine biosynthesis in Leptospira interrogans serotype lai strain 56601 proceeds via a threonine-independent pathway.</title>
        <authorList>
            <person name="Xu H."/>
            <person name="Zhang Y."/>
            <person name="Guo X."/>
            <person name="Ren S."/>
            <person name="Staempfli A.A."/>
            <person name="Chiao J."/>
            <person name="Jiang W."/>
            <person name="Zhao G."/>
        </authorList>
    </citation>
    <scope>FUNCTION</scope>
    <scope>CATALYTIC ACTIVITY</scope>
    <scope>BIOPHYSICOCHEMICAL PROPERTIES</scope>
    <scope>PATHWAY</scope>
    <scope>INDUCTION</scope>
    <source>
        <strain>56601</strain>
    </source>
</reference>
<dbReference type="EC" id="2.3.3.13" evidence="4"/>
<dbReference type="EMBL" id="AE010300">
    <property type="protein sequence ID" value="AAN47668.1"/>
    <property type="molecule type" value="Genomic_DNA"/>
</dbReference>
<dbReference type="RefSeq" id="NP_710650.1">
    <property type="nucleotide sequence ID" value="NC_004342.2"/>
</dbReference>
<dbReference type="RefSeq" id="WP_000806758.1">
    <property type="nucleotide sequence ID" value="NC_004342.2"/>
</dbReference>
<dbReference type="SMR" id="Q8F8T4"/>
<dbReference type="STRING" id="189518.LA_0469"/>
<dbReference type="PaxDb" id="189518-LA_0469"/>
<dbReference type="EnsemblBacteria" id="AAN47668">
    <property type="protein sequence ID" value="AAN47668"/>
    <property type="gene ID" value="LA_0469"/>
</dbReference>
<dbReference type="KEGG" id="lil:LA_0469"/>
<dbReference type="PATRIC" id="fig|189518.3.peg.477"/>
<dbReference type="HOGENOM" id="CLU_022158_0_2_12"/>
<dbReference type="InParanoid" id="Q8F8T4"/>
<dbReference type="OrthoDB" id="9804858at2"/>
<dbReference type="UniPathway" id="UPA00048">
    <property type="reaction ID" value="UER00070"/>
</dbReference>
<dbReference type="Proteomes" id="UP000001408">
    <property type="component" value="Chromosome I"/>
</dbReference>
<dbReference type="GO" id="GO:0005737">
    <property type="term" value="C:cytoplasm"/>
    <property type="evidence" value="ECO:0007669"/>
    <property type="project" value="UniProtKB-SubCell"/>
</dbReference>
<dbReference type="GO" id="GO:0003852">
    <property type="term" value="F:2-isopropylmalate synthase activity"/>
    <property type="evidence" value="ECO:0000318"/>
    <property type="project" value="GO_Central"/>
</dbReference>
<dbReference type="GO" id="GO:0046872">
    <property type="term" value="F:metal ion binding"/>
    <property type="evidence" value="ECO:0007669"/>
    <property type="project" value="UniProtKB-KW"/>
</dbReference>
<dbReference type="GO" id="GO:0009098">
    <property type="term" value="P:L-leucine biosynthetic process"/>
    <property type="evidence" value="ECO:0000318"/>
    <property type="project" value="GO_Central"/>
</dbReference>
<dbReference type="FunFam" id="3.20.20.70:FF:000399">
    <property type="entry name" value="Homocitrate synthase"/>
    <property type="match status" value="1"/>
</dbReference>
<dbReference type="Gene3D" id="3.20.20.70">
    <property type="entry name" value="Aldolase class I"/>
    <property type="match status" value="1"/>
</dbReference>
<dbReference type="InterPro" id="IPR050073">
    <property type="entry name" value="2-IPM_HCS-like"/>
</dbReference>
<dbReference type="InterPro" id="IPR002034">
    <property type="entry name" value="AIPM/Hcit_synth_CS"/>
</dbReference>
<dbReference type="InterPro" id="IPR013785">
    <property type="entry name" value="Aldolase_TIM"/>
</dbReference>
<dbReference type="InterPro" id="IPR054901">
    <property type="entry name" value="IPMS_Lepto"/>
</dbReference>
<dbReference type="InterPro" id="IPR054692">
    <property type="entry name" value="LeuA-like_post-cat"/>
</dbReference>
<dbReference type="InterPro" id="IPR000891">
    <property type="entry name" value="PYR_CT"/>
</dbReference>
<dbReference type="NCBIfam" id="NF042434">
    <property type="entry name" value="IPMS_Lepto"/>
    <property type="match status" value="1"/>
</dbReference>
<dbReference type="PANTHER" id="PTHR10277:SF9">
    <property type="entry name" value="2-ISOPROPYLMALATE SYNTHASE 1, CHLOROPLASTIC-RELATED"/>
    <property type="match status" value="1"/>
</dbReference>
<dbReference type="PANTHER" id="PTHR10277">
    <property type="entry name" value="HOMOCITRATE SYNTHASE-RELATED"/>
    <property type="match status" value="1"/>
</dbReference>
<dbReference type="Pfam" id="PF00682">
    <property type="entry name" value="HMGL-like"/>
    <property type="match status" value="1"/>
</dbReference>
<dbReference type="Pfam" id="PF22615">
    <property type="entry name" value="IPMS_D2"/>
    <property type="match status" value="1"/>
</dbReference>
<dbReference type="SUPFAM" id="SSF51569">
    <property type="entry name" value="Aldolase"/>
    <property type="match status" value="1"/>
</dbReference>
<dbReference type="PROSITE" id="PS00815">
    <property type="entry name" value="AIPM_HOMOCIT_SYNTH_1"/>
    <property type="match status" value="1"/>
</dbReference>
<dbReference type="PROSITE" id="PS00816">
    <property type="entry name" value="AIPM_HOMOCIT_SYNTH_2"/>
    <property type="match status" value="1"/>
</dbReference>
<dbReference type="PROSITE" id="PS50991">
    <property type="entry name" value="PYR_CT"/>
    <property type="match status" value="1"/>
</dbReference>
<evidence type="ECO:0000250" key="1">
    <source>
        <dbReference type="UniProtKB" id="Q9JZG1"/>
    </source>
</evidence>
<evidence type="ECO:0000255" key="2">
    <source>
        <dbReference type="PROSITE-ProRule" id="PRU01151"/>
    </source>
</evidence>
<evidence type="ECO:0000269" key="3">
    <source>
    </source>
</evidence>
<evidence type="ECO:0000269" key="4">
    <source>
    </source>
</evidence>
<evidence type="ECO:0000303" key="5">
    <source>
    </source>
</evidence>
<evidence type="ECO:0000305" key="6"/>
<evidence type="ECO:0000312" key="7">
    <source>
        <dbReference type="EMBL" id="AAN47668.1"/>
    </source>
</evidence>
<gene>
    <name evidence="5" type="primary">leuA2</name>
    <name evidence="7" type="ordered locus">LA_0469</name>
</gene>
<proteinExistence type="evidence at protein level"/>
<organism>
    <name type="scientific">Leptospira interrogans serogroup Icterohaemorrhagiae serovar Lai (strain 56601)</name>
    <dbReference type="NCBI Taxonomy" id="189518"/>
    <lineage>
        <taxon>Bacteria</taxon>
        <taxon>Pseudomonadati</taxon>
        <taxon>Spirochaetota</taxon>
        <taxon>Spirochaetia</taxon>
        <taxon>Leptospirales</taxon>
        <taxon>Leptospiraceae</taxon>
        <taxon>Leptospira</taxon>
    </lineage>
</organism>
<sequence length="428" mass="47721">MKQDSQSENESIVCDLSVSEDQRNVKFFSDLQTPIPKHLPFFMDVTLRDGNQALRRPWNLEQKETIFKQLLKLGVQGIEVGFASSNNQEFEACKYLSSIAPDNVVISSLSRAVEKEIEVSWKAIRFAPKPRIHIVYPVSAFTIQNVLKISPEKVLDRISQSVAYAKSLVGSKGEVQFSGEHFGDSLENLDFAAEAFQIALNNGADVVNLPNTVERYRPWLFVSMVKAVANLLPEDTRISIHTHNDLGMATATTVESYFAGAVQLETALNGLGERAGNTNTYEVAIALHNCGVEVPLNFSTIYETSRLVSYLSEIPIYEKAPLIGEDVISHRSGIHQDGVAKTRHLQKGAYRAFDAALIGRPEGDRIEFTNQSGKSAVYCILKDAGENITLEEAGRLQPILKKISEDLGRRELTLEEIRIEWNRLLRAI</sequence>
<name>LEU12_LEPIN</name>
<feature type="chain" id="PRO_0000449423" description="2-isopropylmalate synthase 2">
    <location>
        <begin position="1"/>
        <end position="428"/>
    </location>
</feature>
<feature type="domain" description="Pyruvate carboxyltransferase" evidence="2">
    <location>
        <begin position="40"/>
        <end position="302"/>
    </location>
</feature>
<feature type="binding site" evidence="1">
    <location>
        <position position="49"/>
    </location>
    <ligand>
        <name>Mn(2+)</name>
        <dbReference type="ChEBI" id="CHEBI:29035"/>
    </ligand>
</feature>
<feature type="binding site" evidence="1">
    <location>
        <position position="241"/>
    </location>
    <ligand>
        <name>Mn(2+)</name>
        <dbReference type="ChEBI" id="CHEBI:29035"/>
    </ligand>
</feature>
<feature type="binding site" evidence="1">
    <location>
        <position position="243"/>
    </location>
    <ligand>
        <name>Mn(2+)</name>
        <dbReference type="ChEBI" id="CHEBI:29035"/>
    </ligand>
</feature>
<feature type="binding site" evidence="1">
    <location>
        <position position="277"/>
    </location>
    <ligand>
        <name>Mn(2+)</name>
        <dbReference type="ChEBI" id="CHEBI:29035"/>
    </ligand>
</feature>
<keyword id="KW-0028">Amino-acid biosynthesis</keyword>
<keyword id="KW-0100">Branched-chain amino acid biosynthesis</keyword>
<keyword id="KW-0963">Cytoplasm</keyword>
<keyword id="KW-0432">Leucine biosynthesis</keyword>
<keyword id="KW-0464">Manganese</keyword>
<keyword id="KW-0479">Metal-binding</keyword>
<keyword id="KW-1185">Reference proteome</keyword>
<keyword id="KW-0808">Transferase</keyword>
<accession>Q8F8T4</accession>